<protein>
    <recommendedName>
        <fullName>LYR motif-containing protein 4A</fullName>
    </recommendedName>
</protein>
<comment type="similarity">
    <text evidence="1">Belongs to the complex I LYR family.</text>
</comment>
<gene>
    <name type="primary">lyrm4a</name>
</gene>
<evidence type="ECO:0000305" key="1"/>
<feature type="chain" id="PRO_0000370333" description="LYR motif-containing protein 4A">
    <location>
        <begin position="1"/>
        <end position="92"/>
    </location>
</feature>
<reference key="1">
    <citation type="journal article" date="2010" name="BMC Genomics">
        <title>Salmo salar and Esox lucius full-length cDNA sequences reveal changes in evolutionary pressures on a post-tetraploidization genome.</title>
        <authorList>
            <person name="Leong J.S."/>
            <person name="Jantzen S.G."/>
            <person name="von Schalburg K.R."/>
            <person name="Cooper G.A."/>
            <person name="Messmer A.M."/>
            <person name="Liao N.Y."/>
            <person name="Munro S."/>
            <person name="Moore R."/>
            <person name="Holt R.A."/>
            <person name="Jones S.J."/>
            <person name="Davidson W.S."/>
            <person name="Koop B.F."/>
        </authorList>
    </citation>
    <scope>NUCLEOTIDE SEQUENCE [LARGE SCALE MRNA]</scope>
    <source>
        <tissue>Brain</tissue>
    </source>
</reference>
<keyword id="KW-1185">Reference proteome</keyword>
<dbReference type="EMBL" id="BT046418">
    <property type="protein sequence ID" value="ACI66219.1"/>
    <property type="molecule type" value="mRNA"/>
</dbReference>
<dbReference type="SMR" id="B5X5U9"/>
<dbReference type="STRING" id="8030.ENSSSAP00000045292"/>
<dbReference type="PaxDb" id="8030-ENSSSAP00000045292"/>
<dbReference type="GeneID" id="106597138"/>
<dbReference type="KEGG" id="sasa:106597138"/>
<dbReference type="CTD" id="57128"/>
<dbReference type="OrthoDB" id="564949at7898"/>
<dbReference type="Proteomes" id="UP000087266">
    <property type="component" value="Chromosome ssa03"/>
</dbReference>
<dbReference type="GO" id="GO:1990221">
    <property type="term" value="C:L-cysteine desulfurase complex"/>
    <property type="evidence" value="ECO:0007669"/>
    <property type="project" value="TreeGrafter"/>
</dbReference>
<dbReference type="GO" id="GO:0005739">
    <property type="term" value="C:mitochondrion"/>
    <property type="evidence" value="ECO:0007669"/>
    <property type="project" value="TreeGrafter"/>
</dbReference>
<dbReference type="GO" id="GO:0016226">
    <property type="term" value="P:iron-sulfur cluster assembly"/>
    <property type="evidence" value="ECO:0007669"/>
    <property type="project" value="InterPro"/>
</dbReference>
<dbReference type="CDD" id="cd20264">
    <property type="entry name" value="Complex1_LYR_LYRM4"/>
    <property type="match status" value="1"/>
</dbReference>
<dbReference type="InterPro" id="IPR008011">
    <property type="entry name" value="Complex1_LYR_dom"/>
</dbReference>
<dbReference type="InterPro" id="IPR045297">
    <property type="entry name" value="Complex1_LYR_LYRM4"/>
</dbReference>
<dbReference type="InterPro" id="IPR051522">
    <property type="entry name" value="ISC_assembly_LYR"/>
</dbReference>
<dbReference type="PANTHER" id="PTHR13166:SF7">
    <property type="entry name" value="LYR MOTIF-CONTAINING PROTEIN 4"/>
    <property type="match status" value="1"/>
</dbReference>
<dbReference type="PANTHER" id="PTHR13166">
    <property type="entry name" value="PROTEIN C6ORF149"/>
    <property type="match status" value="1"/>
</dbReference>
<dbReference type="Pfam" id="PF05347">
    <property type="entry name" value="Complex1_LYR"/>
    <property type="match status" value="1"/>
</dbReference>
<sequence length="92" mass="10849">MAACSRTQVISLYRMLIKESKKFPSYNYRTYALRRVKDSFRENLHVDNPKTLDMLLNQARENLAVIRRQVSIGQMYTAQRTIVEETGVHRDL</sequence>
<name>LYM4A_SALSA</name>
<proteinExistence type="inferred from homology"/>
<organism>
    <name type="scientific">Salmo salar</name>
    <name type="common">Atlantic salmon</name>
    <dbReference type="NCBI Taxonomy" id="8030"/>
    <lineage>
        <taxon>Eukaryota</taxon>
        <taxon>Metazoa</taxon>
        <taxon>Chordata</taxon>
        <taxon>Craniata</taxon>
        <taxon>Vertebrata</taxon>
        <taxon>Euteleostomi</taxon>
        <taxon>Actinopterygii</taxon>
        <taxon>Neopterygii</taxon>
        <taxon>Teleostei</taxon>
        <taxon>Protacanthopterygii</taxon>
        <taxon>Salmoniformes</taxon>
        <taxon>Salmonidae</taxon>
        <taxon>Salmoninae</taxon>
        <taxon>Salmo</taxon>
    </lineage>
</organism>
<accession>B5X5U9</accession>